<feature type="chain" id="PRO_1000090725" description="Ribosome-recycling factor">
    <location>
        <begin position="1"/>
        <end position="179"/>
    </location>
</feature>
<protein>
    <recommendedName>
        <fullName evidence="1">Ribosome-recycling factor</fullName>
        <shortName evidence="1">RRF</shortName>
    </recommendedName>
    <alternativeName>
        <fullName evidence="1">Ribosome-releasing factor</fullName>
    </alternativeName>
</protein>
<proteinExistence type="inferred from homology"/>
<comment type="function">
    <text evidence="1">Responsible for the release of ribosomes from messenger RNA at the termination of protein biosynthesis. May increase the efficiency of translation by recycling ribosomes from one round of translation to another.</text>
</comment>
<comment type="subcellular location">
    <subcellularLocation>
        <location evidence="1">Cytoplasm</location>
    </subcellularLocation>
</comment>
<comment type="similarity">
    <text evidence="1">Belongs to the RRF family.</text>
</comment>
<accession>B0BAD2</accession>
<sequence length="179" mass="20054">MTLASAEKEMAGVLTFFQKETRGFRTGKAHPALVETVTVEVYGTTMRLSDIASISVSDMRQLLISPYDAGTVSAISKGILAANLNLQPIVEGATVRINVPEPTEEYRREVIKQLKRKSEEAKVAIRNIRRTFNDRLKKDDNLTEDAVKSLEKKIQELTDKFCKQIEELAKQKEAELATV</sequence>
<gene>
    <name evidence="1" type="primary">frr</name>
    <name type="ordered locus">CTLon_0046</name>
</gene>
<keyword id="KW-0963">Cytoplasm</keyword>
<keyword id="KW-0648">Protein biosynthesis</keyword>
<evidence type="ECO:0000255" key="1">
    <source>
        <dbReference type="HAMAP-Rule" id="MF_00040"/>
    </source>
</evidence>
<name>RRF_CHLTB</name>
<organism>
    <name type="scientific">Chlamydia trachomatis serovar L2b (strain UCH-1/proctitis)</name>
    <dbReference type="NCBI Taxonomy" id="471473"/>
    <lineage>
        <taxon>Bacteria</taxon>
        <taxon>Pseudomonadati</taxon>
        <taxon>Chlamydiota</taxon>
        <taxon>Chlamydiia</taxon>
        <taxon>Chlamydiales</taxon>
        <taxon>Chlamydiaceae</taxon>
        <taxon>Chlamydia/Chlamydophila group</taxon>
        <taxon>Chlamydia</taxon>
    </lineage>
</organism>
<dbReference type="EMBL" id="AM884177">
    <property type="protein sequence ID" value="CAP06444.1"/>
    <property type="molecule type" value="Genomic_DNA"/>
</dbReference>
<dbReference type="RefSeq" id="WP_009873288.1">
    <property type="nucleotide sequence ID" value="NC_010280.2"/>
</dbReference>
<dbReference type="SMR" id="B0BAD2"/>
<dbReference type="KEGG" id="ctl:CTLon_0046"/>
<dbReference type="HOGENOM" id="CLU_073981_2_1_0"/>
<dbReference type="Proteomes" id="UP001154401">
    <property type="component" value="Chromosome"/>
</dbReference>
<dbReference type="GO" id="GO:0005737">
    <property type="term" value="C:cytoplasm"/>
    <property type="evidence" value="ECO:0007669"/>
    <property type="project" value="UniProtKB-SubCell"/>
</dbReference>
<dbReference type="GO" id="GO:0043023">
    <property type="term" value="F:ribosomal large subunit binding"/>
    <property type="evidence" value="ECO:0007669"/>
    <property type="project" value="TreeGrafter"/>
</dbReference>
<dbReference type="GO" id="GO:0006415">
    <property type="term" value="P:translational termination"/>
    <property type="evidence" value="ECO:0007669"/>
    <property type="project" value="UniProtKB-UniRule"/>
</dbReference>
<dbReference type="CDD" id="cd00520">
    <property type="entry name" value="RRF"/>
    <property type="match status" value="1"/>
</dbReference>
<dbReference type="FunFam" id="1.10.132.20:FF:000001">
    <property type="entry name" value="Ribosome-recycling factor"/>
    <property type="match status" value="1"/>
</dbReference>
<dbReference type="FunFam" id="3.30.1360.40:FF:000001">
    <property type="entry name" value="Ribosome-recycling factor"/>
    <property type="match status" value="1"/>
</dbReference>
<dbReference type="Gene3D" id="3.30.1360.40">
    <property type="match status" value="1"/>
</dbReference>
<dbReference type="Gene3D" id="1.10.132.20">
    <property type="entry name" value="Ribosome-recycling factor"/>
    <property type="match status" value="1"/>
</dbReference>
<dbReference type="HAMAP" id="MF_00040">
    <property type="entry name" value="RRF"/>
    <property type="match status" value="1"/>
</dbReference>
<dbReference type="InterPro" id="IPR002661">
    <property type="entry name" value="Ribosome_recyc_fac"/>
</dbReference>
<dbReference type="InterPro" id="IPR023584">
    <property type="entry name" value="Ribosome_recyc_fac_dom"/>
</dbReference>
<dbReference type="InterPro" id="IPR036191">
    <property type="entry name" value="RRF_sf"/>
</dbReference>
<dbReference type="NCBIfam" id="TIGR00496">
    <property type="entry name" value="frr"/>
    <property type="match status" value="1"/>
</dbReference>
<dbReference type="PANTHER" id="PTHR20982:SF3">
    <property type="entry name" value="MITOCHONDRIAL RIBOSOME RECYCLING FACTOR PSEUDO 1"/>
    <property type="match status" value="1"/>
</dbReference>
<dbReference type="PANTHER" id="PTHR20982">
    <property type="entry name" value="RIBOSOME RECYCLING FACTOR"/>
    <property type="match status" value="1"/>
</dbReference>
<dbReference type="Pfam" id="PF01765">
    <property type="entry name" value="RRF"/>
    <property type="match status" value="1"/>
</dbReference>
<dbReference type="SUPFAM" id="SSF55194">
    <property type="entry name" value="Ribosome recycling factor, RRF"/>
    <property type="match status" value="1"/>
</dbReference>
<reference key="1">
    <citation type="journal article" date="2008" name="Genome Res.">
        <title>Chlamydia trachomatis: genome sequence analysis of lymphogranuloma venereum isolates.</title>
        <authorList>
            <person name="Thomson N.R."/>
            <person name="Holden M.T.G."/>
            <person name="Carder C."/>
            <person name="Lennard N."/>
            <person name="Lockey S.J."/>
            <person name="Marsh P."/>
            <person name="Skipp P."/>
            <person name="O'Connor C.D."/>
            <person name="Goodhead I."/>
            <person name="Norbertzcak H."/>
            <person name="Harris B."/>
            <person name="Ormond D."/>
            <person name="Rance R."/>
            <person name="Quail M.A."/>
            <person name="Parkhill J."/>
            <person name="Stephens R.S."/>
            <person name="Clarke I.N."/>
        </authorList>
    </citation>
    <scope>NUCLEOTIDE SEQUENCE [LARGE SCALE GENOMIC DNA]</scope>
    <source>
        <strain>UCH-1/proctitis</strain>
    </source>
</reference>